<dbReference type="EC" id="7.1.1.9"/>
<dbReference type="EMBL" id="DQ019097">
    <property type="protein sequence ID" value="ABA28383.1"/>
    <property type="molecule type" value="Genomic_DNA"/>
</dbReference>
<dbReference type="SMR" id="Q38S17"/>
<dbReference type="GO" id="GO:0005743">
    <property type="term" value="C:mitochondrial inner membrane"/>
    <property type="evidence" value="ECO:0007669"/>
    <property type="project" value="UniProtKB-SubCell"/>
</dbReference>
<dbReference type="GO" id="GO:0045277">
    <property type="term" value="C:respiratory chain complex IV"/>
    <property type="evidence" value="ECO:0000250"/>
    <property type="project" value="UniProtKB"/>
</dbReference>
<dbReference type="GO" id="GO:0005507">
    <property type="term" value="F:copper ion binding"/>
    <property type="evidence" value="ECO:0007669"/>
    <property type="project" value="InterPro"/>
</dbReference>
<dbReference type="GO" id="GO:0004129">
    <property type="term" value="F:cytochrome-c oxidase activity"/>
    <property type="evidence" value="ECO:0007669"/>
    <property type="project" value="UniProtKB-EC"/>
</dbReference>
<dbReference type="GO" id="GO:0042773">
    <property type="term" value="P:ATP synthesis coupled electron transport"/>
    <property type="evidence" value="ECO:0007669"/>
    <property type="project" value="TreeGrafter"/>
</dbReference>
<dbReference type="CDD" id="cd13912">
    <property type="entry name" value="CcO_II_C"/>
    <property type="match status" value="1"/>
</dbReference>
<dbReference type="FunFam" id="1.10.287.90:FF:000001">
    <property type="entry name" value="Cytochrome c oxidase subunit 2"/>
    <property type="match status" value="1"/>
</dbReference>
<dbReference type="FunFam" id="2.60.40.420:FF:000001">
    <property type="entry name" value="Cytochrome c oxidase subunit 2"/>
    <property type="match status" value="1"/>
</dbReference>
<dbReference type="Gene3D" id="1.10.287.90">
    <property type="match status" value="1"/>
</dbReference>
<dbReference type="Gene3D" id="2.60.40.420">
    <property type="entry name" value="Cupredoxins - blue copper proteins"/>
    <property type="match status" value="1"/>
</dbReference>
<dbReference type="InterPro" id="IPR045187">
    <property type="entry name" value="CcO_II"/>
</dbReference>
<dbReference type="InterPro" id="IPR002429">
    <property type="entry name" value="CcO_II-like_C"/>
</dbReference>
<dbReference type="InterPro" id="IPR034210">
    <property type="entry name" value="CcO_II_C"/>
</dbReference>
<dbReference type="InterPro" id="IPR001505">
    <property type="entry name" value="Copper_CuA"/>
</dbReference>
<dbReference type="InterPro" id="IPR008972">
    <property type="entry name" value="Cupredoxin"/>
</dbReference>
<dbReference type="InterPro" id="IPR014222">
    <property type="entry name" value="Cyt_c_oxidase_su2"/>
</dbReference>
<dbReference type="InterPro" id="IPR011759">
    <property type="entry name" value="Cyt_c_oxidase_su2_TM_dom"/>
</dbReference>
<dbReference type="InterPro" id="IPR036257">
    <property type="entry name" value="Cyt_c_oxidase_su2_TM_sf"/>
</dbReference>
<dbReference type="NCBIfam" id="TIGR02866">
    <property type="entry name" value="CoxB"/>
    <property type="match status" value="1"/>
</dbReference>
<dbReference type="PANTHER" id="PTHR22888:SF9">
    <property type="entry name" value="CYTOCHROME C OXIDASE SUBUNIT 2"/>
    <property type="match status" value="1"/>
</dbReference>
<dbReference type="PANTHER" id="PTHR22888">
    <property type="entry name" value="CYTOCHROME C OXIDASE, SUBUNIT II"/>
    <property type="match status" value="1"/>
</dbReference>
<dbReference type="Pfam" id="PF00116">
    <property type="entry name" value="COX2"/>
    <property type="match status" value="1"/>
</dbReference>
<dbReference type="Pfam" id="PF02790">
    <property type="entry name" value="COX2_TM"/>
    <property type="match status" value="1"/>
</dbReference>
<dbReference type="PRINTS" id="PR01166">
    <property type="entry name" value="CYCOXIDASEII"/>
</dbReference>
<dbReference type="SUPFAM" id="SSF49503">
    <property type="entry name" value="Cupredoxins"/>
    <property type="match status" value="1"/>
</dbReference>
<dbReference type="SUPFAM" id="SSF81464">
    <property type="entry name" value="Cytochrome c oxidase subunit II-like, transmembrane region"/>
    <property type="match status" value="1"/>
</dbReference>
<dbReference type="PROSITE" id="PS00078">
    <property type="entry name" value="COX2"/>
    <property type="match status" value="1"/>
</dbReference>
<dbReference type="PROSITE" id="PS50857">
    <property type="entry name" value="COX2_CUA"/>
    <property type="match status" value="1"/>
</dbReference>
<dbReference type="PROSITE" id="PS50999">
    <property type="entry name" value="COX2_TM"/>
    <property type="match status" value="1"/>
</dbReference>
<keyword id="KW-0186">Copper</keyword>
<keyword id="KW-0249">Electron transport</keyword>
<keyword id="KW-0460">Magnesium</keyword>
<keyword id="KW-0472">Membrane</keyword>
<keyword id="KW-0479">Metal-binding</keyword>
<keyword id="KW-0496">Mitochondrion</keyword>
<keyword id="KW-0999">Mitochondrion inner membrane</keyword>
<keyword id="KW-0597">Phosphoprotein</keyword>
<keyword id="KW-0679">Respiratory chain</keyword>
<keyword id="KW-1278">Translocase</keyword>
<keyword id="KW-0812">Transmembrane</keyword>
<keyword id="KW-1133">Transmembrane helix</keyword>
<keyword id="KW-0813">Transport</keyword>
<geneLocation type="mitochondrion"/>
<accession>Q38S17</accession>
<evidence type="ECO:0000250" key="1">
    <source>
        <dbReference type="UniProtKB" id="P00403"/>
    </source>
</evidence>
<evidence type="ECO:0000250" key="2">
    <source>
        <dbReference type="UniProtKB" id="P00406"/>
    </source>
</evidence>
<evidence type="ECO:0000250" key="3">
    <source>
        <dbReference type="UniProtKB" id="P00410"/>
    </source>
</evidence>
<evidence type="ECO:0000250" key="4">
    <source>
        <dbReference type="UniProtKB" id="P68530"/>
    </source>
</evidence>
<evidence type="ECO:0000305" key="5"/>
<proteinExistence type="inferred from homology"/>
<comment type="function">
    <text evidence="3">Component of the cytochrome c oxidase, the last enzyme in the mitochondrial electron transport chain which drives oxidative phosphorylation. The respiratory chain contains 3 multisubunit complexes succinate dehydrogenase (complex II, CII), ubiquinol-cytochrome c oxidoreductase (cytochrome b-c1 complex, complex III, CIII) and cytochrome c oxidase (complex IV, CIV), that cooperate to transfer electrons derived from NADH and succinate to molecular oxygen, creating an electrochemical gradient over the inner membrane that drives transmembrane transport and the ATP synthase. Cytochrome c oxidase is the component of the respiratory chain that catalyzes the reduction of oxygen to water. Electrons originating from reduced cytochrome c in the intermembrane space (IMS) are transferred via the dinuclear copper A center (CU(A)) of subunit 2 and heme A of subunit 1 to the active site in subunit 1, a binuclear center (BNC) formed by heme A3 and copper B (CU(B)). The BNC reduces molecular oxygen to 2 water molecules using 4 electrons from cytochrome c in the IMS and 4 protons from the mitochondrial matrix.</text>
</comment>
<comment type="catalytic activity">
    <reaction evidence="3">
        <text>4 Fe(II)-[cytochrome c] + O2 + 8 H(+)(in) = 4 Fe(III)-[cytochrome c] + 2 H2O + 4 H(+)(out)</text>
        <dbReference type="Rhea" id="RHEA:11436"/>
        <dbReference type="Rhea" id="RHEA-COMP:10350"/>
        <dbReference type="Rhea" id="RHEA-COMP:14399"/>
        <dbReference type="ChEBI" id="CHEBI:15377"/>
        <dbReference type="ChEBI" id="CHEBI:15378"/>
        <dbReference type="ChEBI" id="CHEBI:15379"/>
        <dbReference type="ChEBI" id="CHEBI:29033"/>
        <dbReference type="ChEBI" id="CHEBI:29034"/>
        <dbReference type="EC" id="7.1.1.9"/>
    </reaction>
    <physiologicalReaction direction="left-to-right" evidence="3">
        <dbReference type="Rhea" id="RHEA:11437"/>
    </physiologicalReaction>
</comment>
<comment type="cofactor">
    <cofactor evidence="4">
        <name>Cu cation</name>
        <dbReference type="ChEBI" id="CHEBI:23378"/>
    </cofactor>
    <text evidence="4">Binds a dinuclear copper A center per subunit.</text>
</comment>
<comment type="subunit">
    <text evidence="1 4">Component of the cytochrome c oxidase (complex IV, CIV), a multisubunit enzyme composed of 14 subunits. The complex is composed of a catalytic core of 3 subunits MT-CO1, MT-CO2 and MT-CO3, encoded in the mitochondrial DNA, and 11 supernumerary subunits COX4I, COX5A, COX5B, COX6A, COX6B, COX6C, COX7A, COX7B, COX7C, COX8 and NDUFA4, which are encoded in the nuclear genome. The complex exists as a monomer or a dimer and forms supercomplexes (SCs) in the inner mitochondrial membrane with NADH-ubiquinone oxidoreductase (complex I, CI) and ubiquinol-cytochrome c oxidoreductase (cytochrome b-c1 complex, complex III, CIII), resulting in different assemblies (supercomplex SCI(1)III(2)IV(1) and megacomplex MCI(2)III(2)IV(2)) (By similarity). Found in a complex with TMEM177, COA6, COX18, COX20, SCO1 and SCO2. Interacts with TMEM177 in a COX20-dependent manner. Interacts with COX20. Interacts with COX16 (By similarity).</text>
</comment>
<comment type="subcellular location">
    <subcellularLocation>
        <location evidence="4">Mitochondrion inner membrane</location>
        <topology evidence="4">Multi-pass membrane protein</topology>
    </subcellularLocation>
</comment>
<comment type="similarity">
    <text evidence="5">Belongs to the cytochrome c oxidase subunit 2 family.</text>
</comment>
<name>COX2_CONPN</name>
<gene>
    <name type="primary">MT-CO2</name>
    <name type="synonym">COII</name>
    <name type="synonym">COX2</name>
    <name type="synonym">COXII</name>
    <name type="synonym">MTCO2</name>
</gene>
<feature type="chain" id="PRO_0000254918" description="Cytochrome c oxidase subunit 2">
    <location>
        <begin position="1"/>
        <end position="227"/>
    </location>
</feature>
<feature type="topological domain" description="Mitochondrial intermembrane" evidence="4">
    <location>
        <begin position="1"/>
        <end position="14"/>
    </location>
</feature>
<feature type="transmembrane region" description="Helical; Name=I" evidence="4">
    <location>
        <begin position="15"/>
        <end position="45"/>
    </location>
</feature>
<feature type="topological domain" description="Mitochondrial matrix" evidence="4">
    <location>
        <begin position="46"/>
        <end position="59"/>
    </location>
</feature>
<feature type="transmembrane region" description="Helical; Name=II" evidence="4">
    <location>
        <begin position="60"/>
        <end position="87"/>
    </location>
</feature>
<feature type="topological domain" description="Mitochondrial intermembrane" evidence="4">
    <location>
        <begin position="88"/>
        <end position="227"/>
    </location>
</feature>
<feature type="binding site" evidence="4">
    <location>
        <position position="161"/>
    </location>
    <ligand>
        <name>Cu cation</name>
        <dbReference type="ChEBI" id="CHEBI:23378"/>
        <label>A1</label>
    </ligand>
</feature>
<feature type="binding site" evidence="4">
    <location>
        <position position="196"/>
    </location>
    <ligand>
        <name>Cu cation</name>
        <dbReference type="ChEBI" id="CHEBI:23378"/>
        <label>A1</label>
    </ligand>
</feature>
<feature type="binding site" evidence="4">
    <location>
        <position position="196"/>
    </location>
    <ligand>
        <name>Cu cation</name>
        <dbReference type="ChEBI" id="CHEBI:23378"/>
        <label>A2</label>
    </ligand>
</feature>
<feature type="binding site" evidence="4">
    <location>
        <position position="198"/>
    </location>
    <ligand>
        <name>Cu cation</name>
        <dbReference type="ChEBI" id="CHEBI:23378"/>
        <label>A2</label>
    </ligand>
</feature>
<feature type="binding site" evidence="4">
    <location>
        <position position="198"/>
    </location>
    <ligand>
        <name>Mg(2+)</name>
        <dbReference type="ChEBI" id="CHEBI:18420"/>
        <note>ligand shared with MT-CO1</note>
    </ligand>
</feature>
<feature type="binding site" evidence="4">
    <location>
        <position position="200"/>
    </location>
    <ligand>
        <name>Cu cation</name>
        <dbReference type="ChEBI" id="CHEBI:23378"/>
        <label>A1</label>
    </ligand>
</feature>
<feature type="binding site" evidence="4">
    <location>
        <position position="200"/>
    </location>
    <ligand>
        <name>Cu cation</name>
        <dbReference type="ChEBI" id="CHEBI:23378"/>
        <label>A2</label>
    </ligand>
</feature>
<feature type="binding site" evidence="4">
    <location>
        <position position="204"/>
    </location>
    <ligand>
        <name>Cu cation</name>
        <dbReference type="ChEBI" id="CHEBI:23378"/>
        <label>A2</label>
    </ligand>
</feature>
<feature type="binding site" evidence="4">
    <location>
        <position position="207"/>
    </location>
    <ligand>
        <name>Cu cation</name>
        <dbReference type="ChEBI" id="CHEBI:23378"/>
        <label>A1</label>
    </ligand>
</feature>
<feature type="modified residue" description="Phosphotyrosine" evidence="2">
    <location>
        <position position="218"/>
    </location>
</feature>
<reference key="1">
    <citation type="journal article" date="2005" name="Mol. Phylogenet. Evol.">
        <title>Multigene phylogeny of the Old World mice, Murinae, reveals distinct geographic lineages and the declining utility of mitochondrial genes compared to nuclear genes.</title>
        <authorList>
            <person name="Steppan S.J."/>
            <person name="Adkins R.M."/>
            <person name="Spinks P.Q."/>
            <person name="Hale C."/>
        </authorList>
    </citation>
    <scope>NUCLEOTIDE SEQUENCE [GENOMIC DNA]</scope>
</reference>
<protein>
    <recommendedName>
        <fullName>Cytochrome c oxidase subunit 2</fullName>
        <ecNumber>7.1.1.9</ecNumber>
    </recommendedName>
    <alternativeName>
        <fullName>Cytochrome c oxidase polypeptide II</fullName>
    </alternativeName>
</protein>
<organism>
    <name type="scientific">Conilurus penicillatus</name>
    <name type="common">Brush-tailed rabbit-rat</name>
    <name type="synonym">Hapalotis hemileucura</name>
    <dbReference type="NCBI Taxonomy" id="10127"/>
    <lineage>
        <taxon>Eukaryota</taxon>
        <taxon>Metazoa</taxon>
        <taxon>Chordata</taxon>
        <taxon>Craniata</taxon>
        <taxon>Vertebrata</taxon>
        <taxon>Euteleostomi</taxon>
        <taxon>Mammalia</taxon>
        <taxon>Eutheria</taxon>
        <taxon>Euarchontoglires</taxon>
        <taxon>Glires</taxon>
        <taxon>Rodentia</taxon>
        <taxon>Myomorpha</taxon>
        <taxon>Muroidea</taxon>
        <taxon>Muridae</taxon>
        <taxon>Murinae</taxon>
        <taxon>Conilurus</taxon>
    </lineage>
</organism>
<sequence length="227" mass="25859">MAYPFQLGLQDATSPIMEELTNFHDHTLMIVFLISSLVLYIISLMLTTKLTHTSTMDAQEVETIWTILPAAILVLIALPSLRILYMMDEINNPVLTVKTMGHQWYWSYEYTDYEDLCFDSYMVPTNELKPGELRLLEVDNRVVLPMELPIRMLISSEDVLHSWAVPSLGLKTDAIPGRLNQATVTSNRPGLFYGQCSEICGSNHSFMPIVLEMVPLKYFESWSASMI</sequence>